<reference key="1">
    <citation type="submission" date="2001-10" db="EMBL/GenBank/DDBJ databases">
        <title>Cloning and sequencing of cDNA encoding the bovine homologue of CD97.</title>
        <authorList>
            <person name="Eichler W."/>
            <person name="Haenel C."/>
            <person name="Vogel B."/>
            <person name="Stieler J.S."/>
        </authorList>
    </citation>
    <scope>NUCLEOTIDE SEQUENCE [MRNA]</scope>
</reference>
<dbReference type="EMBL" id="AJ416058">
    <property type="protein sequence ID" value="CAC94754.1"/>
    <property type="molecule type" value="mRNA"/>
</dbReference>
<dbReference type="RefSeq" id="NP_788834.1">
    <property type="nucleotide sequence ID" value="NM_176661.1"/>
</dbReference>
<dbReference type="SMR" id="Q8SQA4"/>
<dbReference type="FunCoup" id="Q8SQA4">
    <property type="interactions" value="211"/>
</dbReference>
<dbReference type="STRING" id="9913.ENSBTAP00000066821"/>
<dbReference type="MEROPS" id="P02.002"/>
<dbReference type="GlyCosmos" id="Q8SQA4">
    <property type="glycosylation" value="9 sites, No reported glycans"/>
</dbReference>
<dbReference type="GlyGen" id="Q8SQA4">
    <property type="glycosylation" value="9 sites"/>
</dbReference>
<dbReference type="GeneID" id="338066"/>
<dbReference type="KEGG" id="bta:338066"/>
<dbReference type="CTD" id="976"/>
<dbReference type="InParanoid" id="Q8SQA4"/>
<dbReference type="OrthoDB" id="1100386at2759"/>
<dbReference type="Proteomes" id="UP000009136">
    <property type="component" value="Unplaced"/>
</dbReference>
<dbReference type="GO" id="GO:0005576">
    <property type="term" value="C:extracellular region"/>
    <property type="evidence" value="ECO:0007669"/>
    <property type="project" value="UniProtKB-SubCell"/>
</dbReference>
<dbReference type="GO" id="GO:0005886">
    <property type="term" value="C:plasma membrane"/>
    <property type="evidence" value="ECO:0000318"/>
    <property type="project" value="GO_Central"/>
</dbReference>
<dbReference type="GO" id="GO:0005509">
    <property type="term" value="F:calcium ion binding"/>
    <property type="evidence" value="ECO:0007669"/>
    <property type="project" value="InterPro"/>
</dbReference>
<dbReference type="GO" id="GO:0004930">
    <property type="term" value="F:G protein-coupled receptor activity"/>
    <property type="evidence" value="ECO:0000318"/>
    <property type="project" value="GO_Central"/>
</dbReference>
<dbReference type="GO" id="GO:0007189">
    <property type="term" value="P:adenylate cyclase-activating G protein-coupled receptor signaling pathway"/>
    <property type="evidence" value="ECO:0000318"/>
    <property type="project" value="GO_Central"/>
</dbReference>
<dbReference type="GO" id="GO:0007155">
    <property type="term" value="P:cell adhesion"/>
    <property type="evidence" value="ECO:0007669"/>
    <property type="project" value="UniProtKB-KW"/>
</dbReference>
<dbReference type="GO" id="GO:0007166">
    <property type="term" value="P:cell surface receptor signaling pathway"/>
    <property type="evidence" value="ECO:0007669"/>
    <property type="project" value="InterPro"/>
</dbReference>
<dbReference type="CDD" id="cd00054">
    <property type="entry name" value="EGF_CA"/>
    <property type="match status" value="2"/>
</dbReference>
<dbReference type="FunFam" id="2.10.25.10:FF:000177">
    <property type="entry name" value="Adhesion G protein-coupled receptor E2"/>
    <property type="match status" value="1"/>
</dbReference>
<dbReference type="FunFam" id="2.10.25.10:FF:000216">
    <property type="entry name" value="Adhesion G protein-coupled receptor E2"/>
    <property type="match status" value="1"/>
</dbReference>
<dbReference type="FunFam" id="2.10.25.10:FF:000269">
    <property type="entry name" value="Adhesion G protein-coupled receptor E2"/>
    <property type="match status" value="1"/>
</dbReference>
<dbReference type="FunFam" id="1.20.1070.10:FF:000136">
    <property type="entry name" value="Adhesion G protein-coupled receptor E5"/>
    <property type="match status" value="1"/>
</dbReference>
<dbReference type="FunFam" id="2.60.220.50:FF:000007">
    <property type="entry name" value="Adhesion G protein-coupled receptor E5"/>
    <property type="match status" value="1"/>
</dbReference>
<dbReference type="Gene3D" id="2.60.220.50">
    <property type="match status" value="1"/>
</dbReference>
<dbReference type="Gene3D" id="2.10.25.10">
    <property type="entry name" value="Laminin"/>
    <property type="match status" value="3"/>
</dbReference>
<dbReference type="Gene3D" id="1.20.1070.10">
    <property type="entry name" value="Rhodopsin 7-helix transmembrane proteins"/>
    <property type="match status" value="1"/>
</dbReference>
<dbReference type="InterPro" id="IPR001881">
    <property type="entry name" value="EGF-like_Ca-bd_dom"/>
</dbReference>
<dbReference type="InterPro" id="IPR000742">
    <property type="entry name" value="EGF-like_dom"/>
</dbReference>
<dbReference type="InterPro" id="IPR000152">
    <property type="entry name" value="EGF-type_Asp/Asn_hydroxyl_site"/>
</dbReference>
<dbReference type="InterPro" id="IPR018097">
    <property type="entry name" value="EGF_Ca-bd_CS"/>
</dbReference>
<dbReference type="InterPro" id="IPR057244">
    <property type="entry name" value="GAIN_B"/>
</dbReference>
<dbReference type="InterPro" id="IPR046338">
    <property type="entry name" value="GAIN_dom_sf"/>
</dbReference>
<dbReference type="InterPro" id="IPR017981">
    <property type="entry name" value="GPCR_2-like_7TM"/>
</dbReference>
<dbReference type="InterPro" id="IPR003056">
    <property type="entry name" value="GPCR_2_ADGRE2_ADGRE5"/>
</dbReference>
<dbReference type="InterPro" id="IPR000832">
    <property type="entry name" value="GPCR_2_secretin-like"/>
</dbReference>
<dbReference type="InterPro" id="IPR017983">
    <property type="entry name" value="GPCR_2_secretin-like_CS"/>
</dbReference>
<dbReference type="InterPro" id="IPR000203">
    <property type="entry name" value="GPS"/>
</dbReference>
<dbReference type="InterPro" id="IPR049883">
    <property type="entry name" value="NOTCH1_EGF-like"/>
</dbReference>
<dbReference type="PANTHER" id="PTHR12011:SF348">
    <property type="entry name" value="ADHESION G PROTEIN-COUPLED RECEPTOR E5"/>
    <property type="match status" value="1"/>
</dbReference>
<dbReference type="PANTHER" id="PTHR12011">
    <property type="entry name" value="ADHESION G-PROTEIN COUPLED RECEPTOR"/>
    <property type="match status" value="1"/>
</dbReference>
<dbReference type="Pfam" id="PF00002">
    <property type="entry name" value="7tm_2"/>
    <property type="match status" value="1"/>
</dbReference>
<dbReference type="Pfam" id="PF07645">
    <property type="entry name" value="EGF_CA"/>
    <property type="match status" value="2"/>
</dbReference>
<dbReference type="Pfam" id="PF01825">
    <property type="entry name" value="GPS"/>
    <property type="match status" value="1"/>
</dbReference>
<dbReference type="PRINTS" id="PR01278">
    <property type="entry name" value="CD97PROTEIN"/>
</dbReference>
<dbReference type="PRINTS" id="PR00249">
    <property type="entry name" value="GPCRSECRETIN"/>
</dbReference>
<dbReference type="SMART" id="SM00181">
    <property type="entry name" value="EGF"/>
    <property type="match status" value="3"/>
</dbReference>
<dbReference type="SMART" id="SM00179">
    <property type="entry name" value="EGF_CA"/>
    <property type="match status" value="2"/>
</dbReference>
<dbReference type="SMART" id="SM00303">
    <property type="entry name" value="GPS"/>
    <property type="match status" value="1"/>
</dbReference>
<dbReference type="SUPFAM" id="SSF57196">
    <property type="entry name" value="EGF/Laminin"/>
    <property type="match status" value="2"/>
</dbReference>
<dbReference type="SUPFAM" id="SSF81321">
    <property type="entry name" value="Family A G protein-coupled receptor-like"/>
    <property type="match status" value="1"/>
</dbReference>
<dbReference type="PROSITE" id="PS00010">
    <property type="entry name" value="ASX_HYDROXYL"/>
    <property type="match status" value="2"/>
</dbReference>
<dbReference type="PROSITE" id="PS50026">
    <property type="entry name" value="EGF_3"/>
    <property type="match status" value="3"/>
</dbReference>
<dbReference type="PROSITE" id="PS01187">
    <property type="entry name" value="EGF_CA"/>
    <property type="match status" value="2"/>
</dbReference>
<dbReference type="PROSITE" id="PS00650">
    <property type="entry name" value="G_PROTEIN_RECEP_F2_2"/>
    <property type="match status" value="1"/>
</dbReference>
<dbReference type="PROSITE" id="PS50261">
    <property type="entry name" value="G_PROTEIN_RECEP_F2_4"/>
    <property type="match status" value="1"/>
</dbReference>
<dbReference type="PROSITE" id="PS50221">
    <property type="entry name" value="GAIN_B"/>
    <property type="match status" value="1"/>
</dbReference>
<accession>Q8SQA4</accession>
<organism>
    <name type="scientific">Bos taurus</name>
    <name type="common">Bovine</name>
    <dbReference type="NCBI Taxonomy" id="9913"/>
    <lineage>
        <taxon>Eukaryota</taxon>
        <taxon>Metazoa</taxon>
        <taxon>Chordata</taxon>
        <taxon>Craniata</taxon>
        <taxon>Vertebrata</taxon>
        <taxon>Euteleostomi</taxon>
        <taxon>Mammalia</taxon>
        <taxon>Eutheria</taxon>
        <taxon>Laurasiatheria</taxon>
        <taxon>Artiodactyla</taxon>
        <taxon>Ruminantia</taxon>
        <taxon>Pecora</taxon>
        <taxon>Bovidae</taxon>
        <taxon>Bovinae</taxon>
        <taxon>Bos</taxon>
    </lineage>
</organism>
<name>AGRE5_BOVIN</name>
<keyword id="KW-0106">Calcium</keyword>
<keyword id="KW-0130">Cell adhesion</keyword>
<keyword id="KW-1003">Cell membrane</keyword>
<keyword id="KW-1015">Disulfide bond</keyword>
<keyword id="KW-0245">EGF-like domain</keyword>
<keyword id="KW-0297">G-protein coupled receptor</keyword>
<keyword id="KW-0325">Glycoprotein</keyword>
<keyword id="KW-0472">Membrane</keyword>
<keyword id="KW-0597">Phosphoprotein</keyword>
<keyword id="KW-0675">Receptor</keyword>
<keyword id="KW-1185">Reference proteome</keyword>
<keyword id="KW-0677">Repeat</keyword>
<keyword id="KW-0964">Secreted</keyword>
<keyword id="KW-0732">Signal</keyword>
<keyword id="KW-0807">Transducer</keyword>
<keyword id="KW-0812">Transmembrane</keyword>
<keyword id="KW-1133">Transmembrane helix</keyword>
<proteinExistence type="evidence at transcript level"/>
<protein>
    <recommendedName>
        <fullName evidence="2">Adhesion G protein-coupled receptor E5</fullName>
    </recommendedName>
    <alternativeName>
        <fullName evidence="2">Leukocyte antigen CD97</fullName>
    </alternativeName>
    <cdAntigenName>CD97</cdAntigenName>
    <component>
        <recommendedName>
            <fullName>Adhesion G protein-coupled receptor E5 subunit alpha</fullName>
        </recommendedName>
    </component>
    <component>
        <recommendedName>
            <fullName>Adhesion G protein-coupled receptor E5 subunit beta</fullName>
        </recommendedName>
    </component>
</protein>
<evidence type="ECO:0000250" key="1"/>
<evidence type="ECO:0000250" key="2">
    <source>
        <dbReference type="UniProtKB" id="P48960"/>
    </source>
</evidence>
<evidence type="ECO:0000250" key="3">
    <source>
        <dbReference type="UniProtKB" id="Q9Z0M6"/>
    </source>
</evidence>
<evidence type="ECO:0000255" key="4"/>
<evidence type="ECO:0000255" key="5">
    <source>
        <dbReference type="PROSITE-ProRule" id="PRU00076"/>
    </source>
</evidence>
<evidence type="ECO:0000255" key="6">
    <source>
        <dbReference type="PROSITE-ProRule" id="PRU00098"/>
    </source>
</evidence>
<evidence type="ECO:0000256" key="7">
    <source>
        <dbReference type="SAM" id="MobiDB-lite"/>
    </source>
</evidence>
<evidence type="ECO:0000305" key="8"/>
<comment type="function">
    <text evidence="3">Receptor potentially involved in both adhesion and signaling processes early after leukocyte activation. Plays an essential role in leukocyte migration.</text>
</comment>
<comment type="subunit">
    <text evidence="1">Forms a heterodimer, consisting of a large extracellular region (alpha subunit) non-covalently linked to a seven-transmembrane moiety (beta subunit). Interacts with complement decay-accelerating factor (DAF) and with chondroitin sulfate (By similarity).</text>
</comment>
<comment type="subcellular location">
    <subcellularLocation>
        <location evidence="3">Cell membrane</location>
        <topology evidence="4">Multi-pass membrane protein</topology>
    </subcellularLocation>
</comment>
<comment type="subcellular location">
    <molecule>Adhesion G protein-coupled receptor E5 subunit alpha</molecule>
    <subcellularLocation>
        <location evidence="8">Secreted</location>
        <location evidence="8">Extracellular space</location>
    </subcellularLocation>
</comment>
<comment type="domain">
    <text evidence="1">The first two EGF domains mediate the interaction with DAF. A third tandemly arranged EGF domain is necessary for the structural integrity of the binding region (By similarity).</text>
</comment>
<comment type="domain">
    <text evidence="1">Binding to chondroitin sulfate is mediated by the fourth EGF domain.</text>
</comment>
<comment type="PTM">
    <text evidence="1">Proteolytically cleaved into 2 subunits, an extracellular alpha subunit and a seven-transmembrane subunit.</text>
</comment>
<comment type="similarity">
    <text evidence="8">Belongs to the G-protein coupled receptor 2 family. LN-TM7 subfamily.</text>
</comment>
<gene>
    <name evidence="2" type="primary">ADGRE5</name>
    <name evidence="2" type="synonym">CD97</name>
</gene>
<feature type="signal peptide" evidence="4">
    <location>
        <begin position="1"/>
        <end position="26"/>
    </location>
</feature>
<feature type="chain" id="PRO_0000012867" description="Adhesion G protein-coupled receptor E5">
    <location>
        <begin position="27"/>
        <end position="734"/>
    </location>
</feature>
<feature type="chain" id="PRO_0000449607" description="Adhesion G protein-coupled receptor E5 subunit alpha" evidence="8">
    <location>
        <begin position="27"/>
        <end position="428"/>
    </location>
</feature>
<feature type="chain" id="PRO_0000449608" description="Adhesion G protein-coupled receptor E5 subunit beta" evidence="8">
    <location>
        <begin position="429"/>
        <end position="734"/>
    </location>
</feature>
<feature type="topological domain" description="Extracellular" evidence="4">
    <location>
        <begin position="27"/>
        <end position="449"/>
    </location>
</feature>
<feature type="transmembrane region" description="Helical; Name=1" evidence="4">
    <location>
        <begin position="450"/>
        <end position="470"/>
    </location>
</feature>
<feature type="topological domain" description="Cytoplasmic" evidence="4">
    <location>
        <begin position="471"/>
        <end position="478"/>
    </location>
</feature>
<feature type="transmembrane region" description="Helical; Name=2" evidence="4">
    <location>
        <begin position="479"/>
        <end position="499"/>
    </location>
</feature>
<feature type="topological domain" description="Extracellular" evidence="4">
    <location>
        <begin position="500"/>
        <end position="519"/>
    </location>
</feature>
<feature type="transmembrane region" description="Helical; Name=3" evidence="4">
    <location>
        <begin position="520"/>
        <end position="540"/>
    </location>
</feature>
<feature type="topological domain" description="Cytoplasmic" evidence="4">
    <location>
        <begin position="541"/>
        <end position="550"/>
    </location>
</feature>
<feature type="transmembrane region" description="Helical; Name=4" evidence="4">
    <location>
        <begin position="551"/>
        <end position="571"/>
    </location>
</feature>
<feature type="topological domain" description="Extracellular" evidence="4">
    <location>
        <begin position="572"/>
        <end position="593"/>
    </location>
</feature>
<feature type="transmembrane region" description="Helical; Name=5" evidence="4">
    <location>
        <begin position="594"/>
        <end position="614"/>
    </location>
</feature>
<feature type="topological domain" description="Cytoplasmic" evidence="4">
    <location>
        <begin position="615"/>
        <end position="637"/>
    </location>
</feature>
<feature type="transmembrane region" description="Helical; Name=6" evidence="4">
    <location>
        <begin position="638"/>
        <end position="658"/>
    </location>
</feature>
<feature type="topological domain" description="Extracellular" evidence="4">
    <location>
        <begin position="659"/>
        <end position="662"/>
    </location>
</feature>
<feature type="transmembrane region" description="Helical; Name=7" evidence="4">
    <location>
        <begin position="663"/>
        <end position="683"/>
    </location>
</feature>
<feature type="topological domain" description="Cytoplasmic" evidence="4">
    <location>
        <begin position="684"/>
        <end position="734"/>
    </location>
</feature>
<feature type="domain" description="EGF-like 1" evidence="5">
    <location>
        <begin position="28"/>
        <end position="70"/>
    </location>
</feature>
<feature type="domain" description="EGF-like 2; calcium-binding" evidence="5">
    <location>
        <begin position="71"/>
        <end position="122"/>
    </location>
</feature>
<feature type="domain" description="EGF-like 3; calcium-binding" evidence="5">
    <location>
        <begin position="123"/>
        <end position="171"/>
    </location>
</feature>
<feature type="domain" description="GAIN-B" evidence="6">
    <location>
        <begin position="265"/>
        <end position="441"/>
    </location>
</feature>
<feature type="region of interest" description="GPS" evidence="6">
    <location>
        <begin position="393"/>
        <end position="441"/>
    </location>
</feature>
<feature type="region of interest" description="Disordered" evidence="7">
    <location>
        <begin position="712"/>
        <end position="734"/>
    </location>
</feature>
<feature type="site" description="Cleavage; by autolysis" evidence="6">
    <location>
        <begin position="428"/>
        <end position="429"/>
    </location>
</feature>
<feature type="modified residue" description="Phosphothreonine" evidence="2">
    <location>
        <position position="713"/>
    </location>
</feature>
<feature type="modified residue" description="Phosphoserine" evidence="2">
    <location>
        <position position="715"/>
    </location>
</feature>
<feature type="modified residue" description="Phosphothreonine" evidence="2">
    <location>
        <position position="724"/>
    </location>
</feature>
<feature type="modified residue" description="Phosphoserine" evidence="2">
    <location>
        <position position="730"/>
    </location>
</feature>
<feature type="modified residue" description="Phosphoserine" evidence="2">
    <location>
        <position position="732"/>
    </location>
</feature>
<feature type="glycosylation site" description="N-linked (GlcNAc...) asparagine" evidence="4">
    <location>
        <position position="39"/>
    </location>
</feature>
<feature type="glycosylation site" description="N-linked (GlcNAc...) asparagine" evidence="4">
    <location>
        <position position="44"/>
    </location>
</feature>
<feature type="glycosylation site" description="N-linked (GlcNAc...) asparagine" evidence="4">
    <location>
        <position position="115"/>
    </location>
</feature>
<feature type="glycosylation site" description="N-linked (GlcNAc...) asparagine" evidence="4">
    <location>
        <position position="136"/>
    </location>
</feature>
<feature type="glycosylation site" description="N-linked (GlcNAc...) asparagine" evidence="4">
    <location>
        <position position="285"/>
    </location>
</feature>
<feature type="glycosylation site" description="N-linked (GlcNAc...) asparagine" evidence="4">
    <location>
        <position position="327"/>
    </location>
</feature>
<feature type="glycosylation site" description="N-linked (GlcNAc...) asparagine" evidence="4">
    <location>
        <position position="372"/>
    </location>
</feature>
<feature type="glycosylation site" description="N-linked (GlcNAc...) asparagine" evidence="4">
    <location>
        <position position="403"/>
    </location>
</feature>
<feature type="glycosylation site" description="N-linked (GlcNAc...) asparagine" evidence="4">
    <location>
        <position position="418"/>
    </location>
</feature>
<feature type="disulfide bond" evidence="5">
    <location>
        <begin position="32"/>
        <end position="42"/>
    </location>
</feature>
<feature type="disulfide bond" evidence="5">
    <location>
        <begin position="36"/>
        <end position="48"/>
    </location>
</feature>
<feature type="disulfide bond" evidence="5">
    <location>
        <begin position="50"/>
        <end position="69"/>
    </location>
</feature>
<feature type="disulfide bond" evidence="5">
    <location>
        <begin position="75"/>
        <end position="89"/>
    </location>
</feature>
<feature type="disulfide bond" evidence="5">
    <location>
        <begin position="83"/>
        <end position="98"/>
    </location>
</feature>
<feature type="disulfide bond" evidence="5">
    <location>
        <begin position="100"/>
        <end position="121"/>
    </location>
</feature>
<feature type="disulfide bond" evidence="5">
    <location>
        <begin position="127"/>
        <end position="140"/>
    </location>
</feature>
<feature type="disulfide bond" evidence="5">
    <location>
        <begin position="134"/>
        <end position="149"/>
    </location>
</feature>
<feature type="disulfide bond" evidence="5">
    <location>
        <begin position="151"/>
        <end position="170"/>
    </location>
</feature>
<feature type="disulfide bond" evidence="6">
    <location>
        <begin position="393"/>
        <end position="423"/>
    </location>
</feature>
<feature type="disulfide bond" evidence="6">
    <location>
        <begin position="411"/>
        <end position="425"/>
    </location>
</feature>
<sequence length="734" mass="80322">MGGPHGGPFLLFHVLCFLLTLSEVGSQNSKACALPCPPNSSCVNGTACRCAPGFISFSGEIFTDPLESCDDINECGPPSPVDCGSSADCQNTEGGYYCTCSPGYEPVSGAMIFRNESENTCRDVDECSSGQHQCHNSTVCFNTVGSYTCHCREGWEPKHGLKNKQKDTICKEISFPAWTAPPGIKSRSLSAFFERVQKMSRDFKPAMAKKSMQDLVGSVDDLLKNSGDLESLDQSSKHVTVTHLLSGLEQILRTLAKAMPKGSFTYRSLDNTELSLVVQEQGKGNVTVGQSHARMLLDWAVAAAAEESGPTVVGILSSQNMKKLLANASLKLDSEKLKETYKSPVRGAKVTLLSAVSSVFLSNTNTEKLDSNVSFAFALHEQPELKPRQELICAFWKKDSNGNGSWATTGCWKMGRGNGSITCQCSHLSSFAILMAHYDVEDPKLALITKVGLALSLACLLLCILTFLLVRPIQGSRTTVHLHLCICLFVGSAIFLAGIENEGGEVGTRCRLVAVLLHYCFLAAFCWMSLEGVELYFLVVRVFQGQGMRKLWLCLIGYGVPLIIVGISAGAYSKGYGREKFCWLNFEGGFLWSFVGPVTFIVLGNAIIFVITVWKLTQKFSEINPDIKKLKKARVLTITAIAQLFVLGCTWVFGLLLFNPESWVLSYIFSILNCLQGFFLFVLYCLLNKKVREEYRKWACMVAGNKYSEFATTTSGSGSSHNQTQALRPSESGM</sequence>